<comment type="function">
    <text evidence="1">Binds to 23S rRNA. Forms part of two intersubunit bridges in the 70S ribosome.</text>
</comment>
<comment type="subunit">
    <text evidence="1">Part of the 50S ribosomal subunit. Forms a cluster with proteins L3 and L19. In the 70S ribosome, L14 and L19 interact and together make contacts with the 16S rRNA in bridges B5 and B8.</text>
</comment>
<comment type="similarity">
    <text evidence="1">Belongs to the universal ribosomal protein uL14 family.</text>
</comment>
<accession>A1S228</accession>
<sequence length="122" mass="13443">MIQMQSTLDVACNSGARRVQCIKVLGGSHRRYAGIGDIIKVSVKEAIPRAKAKKGDVYNAVVVRTKKGVRRPDGSVIRFDRNAAVLLNNNLQPIGTRIFGPVTRELRTEQFMKIVSLAPEVL</sequence>
<feature type="chain" id="PRO_1000055695" description="Large ribosomal subunit protein uL14">
    <location>
        <begin position="1"/>
        <end position="122"/>
    </location>
</feature>
<reference key="1">
    <citation type="submission" date="2006-12" db="EMBL/GenBank/DDBJ databases">
        <title>Complete sequence of Shewanella amazonensis SB2B.</title>
        <authorList>
            <consortium name="US DOE Joint Genome Institute"/>
            <person name="Copeland A."/>
            <person name="Lucas S."/>
            <person name="Lapidus A."/>
            <person name="Barry K."/>
            <person name="Detter J.C."/>
            <person name="Glavina del Rio T."/>
            <person name="Hammon N."/>
            <person name="Israni S."/>
            <person name="Dalin E."/>
            <person name="Tice H."/>
            <person name="Pitluck S."/>
            <person name="Munk A.C."/>
            <person name="Brettin T."/>
            <person name="Bruce D."/>
            <person name="Han C."/>
            <person name="Tapia R."/>
            <person name="Gilna P."/>
            <person name="Schmutz J."/>
            <person name="Larimer F."/>
            <person name="Land M."/>
            <person name="Hauser L."/>
            <person name="Kyrpides N."/>
            <person name="Mikhailova N."/>
            <person name="Fredrickson J."/>
            <person name="Richardson P."/>
        </authorList>
    </citation>
    <scope>NUCLEOTIDE SEQUENCE [LARGE SCALE GENOMIC DNA]</scope>
    <source>
        <strain>ATCC BAA-1098 / SB2B</strain>
    </source>
</reference>
<dbReference type="EMBL" id="CP000507">
    <property type="protein sequence ID" value="ABL98434.1"/>
    <property type="molecule type" value="Genomic_DNA"/>
</dbReference>
<dbReference type="RefSeq" id="WP_011758344.1">
    <property type="nucleotide sequence ID" value="NC_008700.1"/>
</dbReference>
<dbReference type="SMR" id="A1S228"/>
<dbReference type="STRING" id="326297.Sama_0223"/>
<dbReference type="KEGG" id="saz:Sama_0223"/>
<dbReference type="eggNOG" id="COG0093">
    <property type="taxonomic scope" value="Bacteria"/>
</dbReference>
<dbReference type="HOGENOM" id="CLU_095071_2_1_6"/>
<dbReference type="OrthoDB" id="9806379at2"/>
<dbReference type="Proteomes" id="UP000009175">
    <property type="component" value="Chromosome"/>
</dbReference>
<dbReference type="GO" id="GO:0022625">
    <property type="term" value="C:cytosolic large ribosomal subunit"/>
    <property type="evidence" value="ECO:0007669"/>
    <property type="project" value="TreeGrafter"/>
</dbReference>
<dbReference type="GO" id="GO:0070180">
    <property type="term" value="F:large ribosomal subunit rRNA binding"/>
    <property type="evidence" value="ECO:0007669"/>
    <property type="project" value="TreeGrafter"/>
</dbReference>
<dbReference type="GO" id="GO:0003735">
    <property type="term" value="F:structural constituent of ribosome"/>
    <property type="evidence" value="ECO:0007669"/>
    <property type="project" value="InterPro"/>
</dbReference>
<dbReference type="GO" id="GO:0006412">
    <property type="term" value="P:translation"/>
    <property type="evidence" value="ECO:0007669"/>
    <property type="project" value="UniProtKB-UniRule"/>
</dbReference>
<dbReference type="CDD" id="cd00337">
    <property type="entry name" value="Ribosomal_uL14"/>
    <property type="match status" value="1"/>
</dbReference>
<dbReference type="FunFam" id="2.40.150.20:FF:000001">
    <property type="entry name" value="50S ribosomal protein L14"/>
    <property type="match status" value="1"/>
</dbReference>
<dbReference type="Gene3D" id="2.40.150.20">
    <property type="entry name" value="Ribosomal protein L14"/>
    <property type="match status" value="1"/>
</dbReference>
<dbReference type="HAMAP" id="MF_01367">
    <property type="entry name" value="Ribosomal_uL14"/>
    <property type="match status" value="1"/>
</dbReference>
<dbReference type="InterPro" id="IPR000218">
    <property type="entry name" value="Ribosomal_uL14"/>
</dbReference>
<dbReference type="InterPro" id="IPR005745">
    <property type="entry name" value="Ribosomal_uL14_bac-type"/>
</dbReference>
<dbReference type="InterPro" id="IPR019972">
    <property type="entry name" value="Ribosomal_uL14_CS"/>
</dbReference>
<dbReference type="InterPro" id="IPR036853">
    <property type="entry name" value="Ribosomal_uL14_sf"/>
</dbReference>
<dbReference type="NCBIfam" id="TIGR01067">
    <property type="entry name" value="rplN_bact"/>
    <property type="match status" value="1"/>
</dbReference>
<dbReference type="PANTHER" id="PTHR11761">
    <property type="entry name" value="50S/60S RIBOSOMAL PROTEIN L14/L23"/>
    <property type="match status" value="1"/>
</dbReference>
<dbReference type="PANTHER" id="PTHR11761:SF3">
    <property type="entry name" value="LARGE RIBOSOMAL SUBUNIT PROTEIN UL14M"/>
    <property type="match status" value="1"/>
</dbReference>
<dbReference type="Pfam" id="PF00238">
    <property type="entry name" value="Ribosomal_L14"/>
    <property type="match status" value="1"/>
</dbReference>
<dbReference type="SMART" id="SM01374">
    <property type="entry name" value="Ribosomal_L14"/>
    <property type="match status" value="1"/>
</dbReference>
<dbReference type="SUPFAM" id="SSF50193">
    <property type="entry name" value="Ribosomal protein L14"/>
    <property type="match status" value="1"/>
</dbReference>
<dbReference type="PROSITE" id="PS00049">
    <property type="entry name" value="RIBOSOMAL_L14"/>
    <property type="match status" value="1"/>
</dbReference>
<evidence type="ECO:0000255" key="1">
    <source>
        <dbReference type="HAMAP-Rule" id="MF_01367"/>
    </source>
</evidence>
<evidence type="ECO:0000305" key="2"/>
<gene>
    <name evidence="1" type="primary">rplN</name>
    <name type="ordered locus">Sama_0223</name>
</gene>
<organism>
    <name type="scientific">Shewanella amazonensis (strain ATCC BAA-1098 / SB2B)</name>
    <dbReference type="NCBI Taxonomy" id="326297"/>
    <lineage>
        <taxon>Bacteria</taxon>
        <taxon>Pseudomonadati</taxon>
        <taxon>Pseudomonadota</taxon>
        <taxon>Gammaproteobacteria</taxon>
        <taxon>Alteromonadales</taxon>
        <taxon>Shewanellaceae</taxon>
        <taxon>Shewanella</taxon>
    </lineage>
</organism>
<proteinExistence type="inferred from homology"/>
<protein>
    <recommendedName>
        <fullName evidence="1">Large ribosomal subunit protein uL14</fullName>
    </recommendedName>
    <alternativeName>
        <fullName evidence="2">50S ribosomal protein L14</fullName>
    </alternativeName>
</protein>
<keyword id="KW-1185">Reference proteome</keyword>
<keyword id="KW-0687">Ribonucleoprotein</keyword>
<keyword id="KW-0689">Ribosomal protein</keyword>
<keyword id="KW-0694">RNA-binding</keyword>
<keyword id="KW-0699">rRNA-binding</keyword>
<name>RL14_SHEAM</name>